<sequence length="105" mass="11711">MGDIEKGKKIFVQKCSQCHTVEKGGKHKTGPNLHGLFGRKTGQAEGFSYTDANKNKGITWGEDTLMEYLENPKKYIPGTKMIFAGIKKKSERVDLIAYLKDATSK</sequence>
<gene>
    <name type="primary">CYC</name>
</gene>
<name>CYC_MELGA</name>
<organism>
    <name type="scientific">Meleagris gallopavo</name>
    <name type="common">Wild turkey</name>
    <dbReference type="NCBI Taxonomy" id="9103"/>
    <lineage>
        <taxon>Eukaryota</taxon>
        <taxon>Metazoa</taxon>
        <taxon>Chordata</taxon>
        <taxon>Craniata</taxon>
        <taxon>Vertebrata</taxon>
        <taxon>Euteleostomi</taxon>
        <taxon>Archelosauria</taxon>
        <taxon>Archosauria</taxon>
        <taxon>Dinosauria</taxon>
        <taxon>Saurischia</taxon>
        <taxon>Theropoda</taxon>
        <taxon>Coelurosauria</taxon>
        <taxon>Aves</taxon>
        <taxon>Neognathae</taxon>
        <taxon>Galloanserae</taxon>
        <taxon>Galliformes</taxon>
        <taxon>Phasianidae</taxon>
        <taxon>Meleagridinae</taxon>
        <taxon>Meleagris</taxon>
    </lineage>
</organism>
<proteinExistence type="evidence at protein level"/>
<comment type="function">
    <text>Electron carrier protein. The oxidized form of the cytochrome c heme group can accept an electron from the heme group of the cytochrome c1 subunit of cytochrome reductase. Cytochrome c then transfers this electron to the cytochrome oxidase complex, the final protein carrier in the mitochondrial electron-transport chain.</text>
</comment>
<comment type="subcellular location">
    <subcellularLocation>
        <location>Mitochondrion intermembrane space</location>
    </subcellularLocation>
    <text>Loosely associated with the inner membrane.</text>
</comment>
<comment type="PTM">
    <text>Binds 1 heme c group covalently per subunit.</text>
</comment>
<comment type="miscellaneous">
    <text>The turkey sequence appears to be identical with that of chicken.</text>
</comment>
<comment type="similarity">
    <text evidence="2">Belongs to the cytochrome c family.</text>
</comment>
<comment type="online information" name="Protein Spotlight">
    <link uri="https://www.proteinspotlight.org/back_issues/076"/>
    <text>Life shuttle - Issue 76 of November 2006</text>
</comment>
<accession>P67882</accession>
<accession>P00016</accession>
<accession>Q9PRU4</accession>
<keyword id="KW-0007">Acetylation</keyword>
<keyword id="KW-0903">Direct protein sequencing</keyword>
<keyword id="KW-0249">Electron transport</keyword>
<keyword id="KW-0349">Heme</keyword>
<keyword id="KW-0408">Iron</keyword>
<keyword id="KW-0479">Metal-binding</keyword>
<keyword id="KW-0496">Mitochondrion</keyword>
<keyword id="KW-1185">Reference proteome</keyword>
<keyword id="KW-0679">Respiratory chain</keyword>
<keyword id="KW-0813">Transport</keyword>
<protein>
    <recommendedName>
        <fullName>Cytochrome c</fullName>
    </recommendedName>
</protein>
<reference key="1">
    <citation type="submission" date="1966-06" db="PIR data bank">
        <authorList>
            <person name="Chan S.K."/>
            <person name="Tulloss I."/>
            <person name="Margoliash E."/>
        </authorList>
    </citation>
    <scope>PARTIAL PROTEIN SEQUENCE</scope>
    <scope>AMINO-ACID COMPOSITION OF TRYPTIC PEPTIDES</scope>
    <scope>ACETYLATION AT GLY-2</scope>
</reference>
<dbReference type="PIR" id="A04612">
    <property type="entry name" value="CCTK"/>
</dbReference>
<dbReference type="RefSeq" id="XP_003207183.1">
    <property type="nucleotide sequence ID" value="XM_003207135.4"/>
</dbReference>
<dbReference type="RefSeq" id="XP_010711090.1">
    <property type="nucleotide sequence ID" value="XM_010712788.2"/>
</dbReference>
<dbReference type="RefSeq" id="XP_010711091.1">
    <property type="nucleotide sequence ID" value="XM_010712789.3"/>
</dbReference>
<dbReference type="SMR" id="P67882"/>
<dbReference type="FunCoup" id="P67882">
    <property type="interactions" value="796"/>
</dbReference>
<dbReference type="Ensembl" id="ENSMGAT00000011899.2">
    <property type="protein sequence ID" value="ENSMGAP00000011030.1"/>
    <property type="gene ID" value="ENSMGAG00000010618.2"/>
</dbReference>
<dbReference type="GeneID" id="100549365"/>
<dbReference type="KEGG" id="mgp:100549365"/>
<dbReference type="CTD" id="40162"/>
<dbReference type="GeneTree" id="ENSGT00940000157883"/>
<dbReference type="HOGENOM" id="CLU_060944_3_0_1"/>
<dbReference type="InParanoid" id="P67882"/>
<dbReference type="OMA" id="KARCAQC"/>
<dbReference type="OrthoDB" id="1554at1549675"/>
<dbReference type="TreeFam" id="TF300226"/>
<dbReference type="Proteomes" id="UP000001645">
    <property type="component" value="Chromosome 6"/>
</dbReference>
<dbReference type="Bgee" id="ENSMGAG00000010618">
    <property type="expression patterns" value="Expressed in heart and 17 other cell types or tissues"/>
</dbReference>
<dbReference type="GO" id="GO:0005758">
    <property type="term" value="C:mitochondrial intermembrane space"/>
    <property type="evidence" value="ECO:0007669"/>
    <property type="project" value="UniProtKB-SubCell"/>
</dbReference>
<dbReference type="GO" id="GO:0009055">
    <property type="term" value="F:electron transfer activity"/>
    <property type="evidence" value="ECO:0007669"/>
    <property type="project" value="InterPro"/>
</dbReference>
<dbReference type="GO" id="GO:0020037">
    <property type="term" value="F:heme binding"/>
    <property type="evidence" value="ECO:0007669"/>
    <property type="project" value="InterPro"/>
</dbReference>
<dbReference type="GO" id="GO:0046872">
    <property type="term" value="F:metal ion binding"/>
    <property type="evidence" value="ECO:0007669"/>
    <property type="project" value="UniProtKB-KW"/>
</dbReference>
<dbReference type="FunFam" id="1.10.760.10:FF:000008">
    <property type="entry name" value="Cytochrome c"/>
    <property type="match status" value="1"/>
</dbReference>
<dbReference type="Gene3D" id="1.10.760.10">
    <property type="entry name" value="Cytochrome c-like domain"/>
    <property type="match status" value="1"/>
</dbReference>
<dbReference type="InterPro" id="IPR009056">
    <property type="entry name" value="Cyt_c-like_dom"/>
</dbReference>
<dbReference type="InterPro" id="IPR036909">
    <property type="entry name" value="Cyt_c-like_dom_sf"/>
</dbReference>
<dbReference type="InterPro" id="IPR002327">
    <property type="entry name" value="Cyt_c_1A/1B"/>
</dbReference>
<dbReference type="PANTHER" id="PTHR11961">
    <property type="entry name" value="CYTOCHROME C"/>
    <property type="match status" value="1"/>
</dbReference>
<dbReference type="Pfam" id="PF00034">
    <property type="entry name" value="Cytochrom_C"/>
    <property type="match status" value="1"/>
</dbReference>
<dbReference type="PRINTS" id="PR00604">
    <property type="entry name" value="CYTCHRMECIAB"/>
</dbReference>
<dbReference type="SUPFAM" id="SSF46626">
    <property type="entry name" value="Cytochrome c"/>
    <property type="match status" value="1"/>
</dbReference>
<dbReference type="PROSITE" id="PS51007">
    <property type="entry name" value="CYTC"/>
    <property type="match status" value="1"/>
</dbReference>
<evidence type="ECO:0000269" key="1">
    <source ref="1"/>
</evidence>
<evidence type="ECO:0000305" key="2"/>
<feature type="initiator methionine" description="Removed" evidence="1">
    <location>
        <position position="1"/>
    </location>
</feature>
<feature type="chain" id="PRO_0000108242" description="Cytochrome c">
    <location>
        <begin position="2"/>
        <end position="105"/>
    </location>
</feature>
<feature type="binding site" description="covalent">
    <location>
        <position position="15"/>
    </location>
    <ligand>
        <name>heme c</name>
        <dbReference type="ChEBI" id="CHEBI:61717"/>
    </ligand>
</feature>
<feature type="binding site" description="covalent">
    <location>
        <position position="18"/>
    </location>
    <ligand>
        <name>heme c</name>
        <dbReference type="ChEBI" id="CHEBI:61717"/>
    </ligand>
</feature>
<feature type="binding site" description="axial binding residue">
    <location>
        <position position="19"/>
    </location>
    <ligand>
        <name>heme c</name>
        <dbReference type="ChEBI" id="CHEBI:61717"/>
    </ligand>
    <ligandPart>
        <name>Fe</name>
        <dbReference type="ChEBI" id="CHEBI:18248"/>
    </ligandPart>
</feature>
<feature type="binding site" description="axial binding residue">
    <location>
        <position position="81"/>
    </location>
    <ligand>
        <name>heme c</name>
        <dbReference type="ChEBI" id="CHEBI:61717"/>
    </ligand>
    <ligandPart>
        <name>Fe</name>
        <dbReference type="ChEBI" id="CHEBI:18248"/>
    </ligandPart>
</feature>
<feature type="modified residue" description="N-acetylglycine" evidence="1">
    <location>
        <position position="2"/>
    </location>
</feature>